<protein>
    <recommendedName>
        <fullName evidence="1">Large ribosomal subunit protein uL14</fullName>
    </recommendedName>
    <alternativeName>
        <fullName evidence="2">50S ribosomal protein L14</fullName>
    </alternativeName>
</protein>
<dbReference type="EMBL" id="AP009152">
    <property type="protein sequence ID" value="BAG28973.1"/>
    <property type="molecule type" value="Genomic_DNA"/>
</dbReference>
<dbReference type="RefSeq" id="WP_012397698.1">
    <property type="nucleotide sequence ID" value="NZ_VECX01000001.1"/>
</dbReference>
<dbReference type="SMR" id="B2GJ03"/>
<dbReference type="STRING" id="378753.KRH_06260"/>
<dbReference type="GeneID" id="93232754"/>
<dbReference type="KEGG" id="krh:KRH_06260"/>
<dbReference type="eggNOG" id="COG0093">
    <property type="taxonomic scope" value="Bacteria"/>
</dbReference>
<dbReference type="HOGENOM" id="CLU_095071_2_1_11"/>
<dbReference type="OrthoDB" id="9806379at2"/>
<dbReference type="Proteomes" id="UP000008838">
    <property type="component" value="Chromosome"/>
</dbReference>
<dbReference type="GO" id="GO:0022625">
    <property type="term" value="C:cytosolic large ribosomal subunit"/>
    <property type="evidence" value="ECO:0007669"/>
    <property type="project" value="TreeGrafter"/>
</dbReference>
<dbReference type="GO" id="GO:0070180">
    <property type="term" value="F:large ribosomal subunit rRNA binding"/>
    <property type="evidence" value="ECO:0007669"/>
    <property type="project" value="TreeGrafter"/>
</dbReference>
<dbReference type="GO" id="GO:0003735">
    <property type="term" value="F:structural constituent of ribosome"/>
    <property type="evidence" value="ECO:0007669"/>
    <property type="project" value="InterPro"/>
</dbReference>
<dbReference type="GO" id="GO:0006412">
    <property type="term" value="P:translation"/>
    <property type="evidence" value="ECO:0007669"/>
    <property type="project" value="UniProtKB-UniRule"/>
</dbReference>
<dbReference type="CDD" id="cd00337">
    <property type="entry name" value="Ribosomal_uL14"/>
    <property type="match status" value="1"/>
</dbReference>
<dbReference type="FunFam" id="2.40.150.20:FF:000001">
    <property type="entry name" value="50S ribosomal protein L14"/>
    <property type="match status" value="1"/>
</dbReference>
<dbReference type="Gene3D" id="2.40.150.20">
    <property type="entry name" value="Ribosomal protein L14"/>
    <property type="match status" value="1"/>
</dbReference>
<dbReference type="HAMAP" id="MF_01367">
    <property type="entry name" value="Ribosomal_uL14"/>
    <property type="match status" value="1"/>
</dbReference>
<dbReference type="InterPro" id="IPR000218">
    <property type="entry name" value="Ribosomal_uL14"/>
</dbReference>
<dbReference type="InterPro" id="IPR005745">
    <property type="entry name" value="Ribosomal_uL14_bac-type"/>
</dbReference>
<dbReference type="InterPro" id="IPR019972">
    <property type="entry name" value="Ribosomal_uL14_CS"/>
</dbReference>
<dbReference type="InterPro" id="IPR036853">
    <property type="entry name" value="Ribosomal_uL14_sf"/>
</dbReference>
<dbReference type="NCBIfam" id="TIGR01067">
    <property type="entry name" value="rplN_bact"/>
    <property type="match status" value="1"/>
</dbReference>
<dbReference type="PANTHER" id="PTHR11761">
    <property type="entry name" value="50S/60S RIBOSOMAL PROTEIN L14/L23"/>
    <property type="match status" value="1"/>
</dbReference>
<dbReference type="PANTHER" id="PTHR11761:SF3">
    <property type="entry name" value="LARGE RIBOSOMAL SUBUNIT PROTEIN UL14M"/>
    <property type="match status" value="1"/>
</dbReference>
<dbReference type="Pfam" id="PF00238">
    <property type="entry name" value="Ribosomal_L14"/>
    <property type="match status" value="1"/>
</dbReference>
<dbReference type="SMART" id="SM01374">
    <property type="entry name" value="Ribosomal_L14"/>
    <property type="match status" value="1"/>
</dbReference>
<dbReference type="SUPFAM" id="SSF50193">
    <property type="entry name" value="Ribosomal protein L14"/>
    <property type="match status" value="1"/>
</dbReference>
<dbReference type="PROSITE" id="PS00049">
    <property type="entry name" value="RIBOSOMAL_L14"/>
    <property type="match status" value="1"/>
</dbReference>
<organism>
    <name type="scientific">Kocuria rhizophila (strain ATCC 9341 / DSM 348 / NBRC 103217 / DC2201)</name>
    <dbReference type="NCBI Taxonomy" id="378753"/>
    <lineage>
        <taxon>Bacteria</taxon>
        <taxon>Bacillati</taxon>
        <taxon>Actinomycetota</taxon>
        <taxon>Actinomycetes</taxon>
        <taxon>Micrococcales</taxon>
        <taxon>Micrococcaceae</taxon>
        <taxon>Kocuria</taxon>
    </lineage>
</organism>
<feature type="chain" id="PRO_1000144286" description="Large ribosomal subunit protein uL14">
    <location>
        <begin position="1"/>
        <end position="122"/>
    </location>
</feature>
<sequence>MIQQESRLRVADNTGAKEILTIRVLGGSGRRYAGIGDVIVATVKDAIPGGNVKKGDVVKAVVVRTKKQRRRPDGSYIRFDENAAVILKNDGDPRGTRIFGPVGRELRDKKFMKIVSLAPEVL</sequence>
<keyword id="KW-1185">Reference proteome</keyword>
<keyword id="KW-0687">Ribonucleoprotein</keyword>
<keyword id="KW-0689">Ribosomal protein</keyword>
<keyword id="KW-0694">RNA-binding</keyword>
<keyword id="KW-0699">rRNA-binding</keyword>
<gene>
    <name evidence="1" type="primary">rplN</name>
    <name type="ordered locus">KRH_06260</name>
</gene>
<name>RL14_KOCRD</name>
<reference key="1">
    <citation type="journal article" date="2008" name="J. Bacteriol.">
        <title>Complete genome sequence of the soil actinomycete Kocuria rhizophila.</title>
        <authorList>
            <person name="Takarada H."/>
            <person name="Sekine M."/>
            <person name="Kosugi H."/>
            <person name="Matsuo Y."/>
            <person name="Fujisawa T."/>
            <person name="Omata S."/>
            <person name="Kishi E."/>
            <person name="Shimizu A."/>
            <person name="Tsukatani N."/>
            <person name="Tanikawa S."/>
            <person name="Fujita N."/>
            <person name="Harayama S."/>
        </authorList>
    </citation>
    <scope>NUCLEOTIDE SEQUENCE [LARGE SCALE GENOMIC DNA]</scope>
    <source>
        <strain>ATCC 9341 / DSM 348 / NBRC 103217 / DC2201</strain>
    </source>
</reference>
<accession>B2GJ03</accession>
<proteinExistence type="inferred from homology"/>
<comment type="function">
    <text evidence="1">Binds to 23S rRNA. Forms part of two intersubunit bridges in the 70S ribosome.</text>
</comment>
<comment type="subunit">
    <text evidence="1">Part of the 50S ribosomal subunit. Forms a cluster with proteins L3 and L19. In the 70S ribosome, L14 and L19 interact and together make contacts with the 16S rRNA in bridges B5 and B8.</text>
</comment>
<comment type="similarity">
    <text evidence="1">Belongs to the universal ribosomal protein uL14 family.</text>
</comment>
<evidence type="ECO:0000255" key="1">
    <source>
        <dbReference type="HAMAP-Rule" id="MF_01367"/>
    </source>
</evidence>
<evidence type="ECO:0000305" key="2"/>